<sequence length="243" mass="26036">MSAVKSALGDMVITFLWVILSATFGIQTAAIVSAVGFHGITWAPLVISTLVVFVSISIFTVIGNVLGGASFNPCGNAAFYTAGVSSDSLFSLAIRSPAQAIGAAGGAITIMEMIPEKYKTRIGGKPSLQFGAHNGAISEVVLSFSVTFLVLLIILRGPRKLLAKTFLLALATVSVFVVGSKFTRPFMNPAIAFGWAYIYKSHNTWDHFYVYWISSYTGAILSAMLFRIIFPAPPLVQKKQKKA</sequence>
<keyword id="KW-0256">Endoplasmic reticulum</keyword>
<keyword id="KW-0472">Membrane</keyword>
<keyword id="KW-1185">Reference proteome</keyword>
<keyword id="KW-0677">Repeat</keyword>
<keyword id="KW-0812">Transmembrane</keyword>
<keyword id="KW-1133">Transmembrane helix</keyword>
<keyword id="KW-0813">Transport</keyword>
<dbReference type="EMBL" id="AB012246">
    <property type="protein sequence ID" value="BAB09487.1"/>
    <property type="molecule type" value="Genomic_DNA"/>
</dbReference>
<dbReference type="EMBL" id="CP002688">
    <property type="protein sequence ID" value="AED92534.1"/>
    <property type="molecule type" value="Genomic_DNA"/>
</dbReference>
<dbReference type="EMBL" id="CP002688">
    <property type="protein sequence ID" value="AED92535.1"/>
    <property type="molecule type" value="Genomic_DNA"/>
</dbReference>
<dbReference type="EMBL" id="AK117849">
    <property type="protein sequence ID" value="BAC42490.1"/>
    <property type="molecule type" value="mRNA"/>
</dbReference>
<dbReference type="EMBL" id="BT005263">
    <property type="protein sequence ID" value="AAO63327.1"/>
    <property type="molecule type" value="mRNA"/>
</dbReference>
<dbReference type="SMR" id="Q9FK43"/>
<dbReference type="BioGRID" id="17223">
    <property type="interactions" value="2"/>
</dbReference>
<dbReference type="FunCoup" id="Q9FK43">
    <property type="interactions" value="3"/>
</dbReference>
<dbReference type="IntAct" id="Q9FK43">
    <property type="interactions" value="2"/>
</dbReference>
<dbReference type="STRING" id="3702.Q9FK43"/>
<dbReference type="PaxDb" id="3702-AT5G18290.1"/>
<dbReference type="ProteomicsDB" id="234549"/>
<dbReference type="EnsemblPlants" id="AT5G18290.1">
    <property type="protein sequence ID" value="AT5G18290.1"/>
    <property type="gene ID" value="AT5G18290"/>
</dbReference>
<dbReference type="EnsemblPlants" id="AT5G18290.2">
    <property type="protein sequence ID" value="AT5G18290.2"/>
    <property type="gene ID" value="AT5G18290"/>
</dbReference>
<dbReference type="Gramene" id="AT5G18290.1">
    <property type="protein sequence ID" value="AT5G18290.1"/>
    <property type="gene ID" value="AT5G18290"/>
</dbReference>
<dbReference type="Gramene" id="AT5G18290.2">
    <property type="protein sequence ID" value="AT5G18290.2"/>
    <property type="gene ID" value="AT5G18290"/>
</dbReference>
<dbReference type="KEGG" id="ath:AT5G18290"/>
<dbReference type="Araport" id="AT5G18290"/>
<dbReference type="TAIR" id="AT5G18290">
    <property type="gene designation" value="SIP1"/>
</dbReference>
<dbReference type="eggNOG" id="KOG0223">
    <property type="taxonomic scope" value="Eukaryota"/>
</dbReference>
<dbReference type="HOGENOM" id="CLU_100006_0_0_1"/>
<dbReference type="InParanoid" id="Q9FK43"/>
<dbReference type="OMA" id="VYWISSY"/>
<dbReference type="OrthoDB" id="3222at2759"/>
<dbReference type="PhylomeDB" id="Q9FK43"/>
<dbReference type="PRO" id="PR:Q9FK43"/>
<dbReference type="Proteomes" id="UP000006548">
    <property type="component" value="Chromosome 5"/>
</dbReference>
<dbReference type="ExpressionAtlas" id="Q9FK43">
    <property type="expression patterns" value="baseline and differential"/>
</dbReference>
<dbReference type="GO" id="GO:0005783">
    <property type="term" value="C:endoplasmic reticulum"/>
    <property type="evidence" value="ECO:0000314"/>
    <property type="project" value="TAIR"/>
</dbReference>
<dbReference type="GO" id="GO:0005789">
    <property type="term" value="C:endoplasmic reticulum membrane"/>
    <property type="evidence" value="ECO:0007669"/>
    <property type="project" value="UniProtKB-SubCell"/>
</dbReference>
<dbReference type="GO" id="GO:0015250">
    <property type="term" value="F:water channel activity"/>
    <property type="evidence" value="ECO:0000314"/>
    <property type="project" value="TAIR"/>
</dbReference>
<dbReference type="FunFam" id="1.20.1080.10:FF:000043">
    <property type="entry name" value="Aquaporin SIP1-1"/>
    <property type="match status" value="1"/>
</dbReference>
<dbReference type="Gene3D" id="1.20.1080.10">
    <property type="entry name" value="Glycerol uptake facilitator protein"/>
    <property type="match status" value="1"/>
</dbReference>
<dbReference type="InterPro" id="IPR023271">
    <property type="entry name" value="Aquaporin-like"/>
</dbReference>
<dbReference type="InterPro" id="IPR000425">
    <property type="entry name" value="MIP"/>
</dbReference>
<dbReference type="InterPro" id="IPR044222">
    <property type="entry name" value="SIP1-1/2-like"/>
</dbReference>
<dbReference type="PANTHER" id="PTHR46739">
    <property type="entry name" value="AQUAPORIN SIP1-1"/>
    <property type="match status" value="1"/>
</dbReference>
<dbReference type="PANTHER" id="PTHR46739:SF5">
    <property type="entry name" value="AQUAPORIN SIP1-2-RELATED"/>
    <property type="match status" value="1"/>
</dbReference>
<dbReference type="Pfam" id="PF00230">
    <property type="entry name" value="MIP"/>
    <property type="match status" value="1"/>
</dbReference>
<dbReference type="PRINTS" id="PR00783">
    <property type="entry name" value="MINTRINSICP"/>
</dbReference>
<dbReference type="SUPFAM" id="SSF81338">
    <property type="entry name" value="Aquaporin-like"/>
    <property type="match status" value="1"/>
</dbReference>
<evidence type="ECO:0000255" key="1"/>
<evidence type="ECO:0000269" key="2">
    <source>
    </source>
</evidence>
<evidence type="ECO:0000269" key="3">
    <source>
    </source>
</evidence>
<evidence type="ECO:0000305" key="4"/>
<proteinExistence type="evidence at transcript level"/>
<protein>
    <recommendedName>
        <fullName>Probable aquaporin SIP1-2</fullName>
    </recommendedName>
    <alternativeName>
        <fullName>Small basic intrinsic protein 1-2</fullName>
        <shortName>AtSIP1;2</shortName>
    </alternativeName>
</protein>
<name>SIP12_ARATH</name>
<accession>Q9FK43</accession>
<comment type="function">
    <text evidence="3">Water channel required to facilitate the transport of water across cell membrane.</text>
</comment>
<comment type="subcellular location">
    <subcellularLocation>
        <location evidence="4">Endoplasmic reticulum membrane</location>
        <topology evidence="4">Multi-pass membrane protein</topology>
    </subcellularLocation>
</comment>
<comment type="tissue specificity">
    <text evidence="2 3">Expressed in roots and above ground. Expressed in elongating regions of the root tips, cotyledons, minor veins and hydathode cells of the rosette leaves. Weakly expressed in vascular tissues of the flower petals, filaments of stamens, upper part of the styles and receptacles of the siliques.</text>
</comment>
<comment type="domain">
    <text>Aquaporins contain two tandem repeats each containing three membrane-spanning domains and a pore-forming loop with the signature motif Asn-Pro-Ala/Cys (NPA).</text>
</comment>
<comment type="similarity">
    <text evidence="4">Belongs to the MIP/aquaporin (TC 1.A.8) family. SIP (TC 1.A.8.10) subfamily.</text>
</comment>
<organism>
    <name type="scientific">Arabidopsis thaliana</name>
    <name type="common">Mouse-ear cress</name>
    <dbReference type="NCBI Taxonomy" id="3702"/>
    <lineage>
        <taxon>Eukaryota</taxon>
        <taxon>Viridiplantae</taxon>
        <taxon>Streptophyta</taxon>
        <taxon>Embryophyta</taxon>
        <taxon>Tracheophyta</taxon>
        <taxon>Spermatophyta</taxon>
        <taxon>Magnoliopsida</taxon>
        <taxon>eudicotyledons</taxon>
        <taxon>Gunneridae</taxon>
        <taxon>Pentapetalae</taxon>
        <taxon>rosids</taxon>
        <taxon>malvids</taxon>
        <taxon>Brassicales</taxon>
        <taxon>Brassicaceae</taxon>
        <taxon>Camelineae</taxon>
        <taxon>Arabidopsis</taxon>
    </lineage>
</organism>
<gene>
    <name type="primary">SIP1-2</name>
    <name type="ordered locus">At5g18290</name>
    <name type="ORF">F20L16_10</name>
    <name type="ORF">MRG7.25</name>
</gene>
<feature type="chain" id="PRO_0000064074" description="Probable aquaporin SIP1-2">
    <location>
        <begin position="1"/>
        <end position="243"/>
    </location>
</feature>
<feature type="transmembrane region" description="Helical; Name=1" evidence="1">
    <location>
        <begin position="12"/>
        <end position="32"/>
    </location>
</feature>
<feature type="transmembrane region" description="Helical; Name=2" evidence="1">
    <location>
        <begin position="42"/>
        <end position="62"/>
    </location>
</feature>
<feature type="transmembrane region" description="Helical; Name=3" evidence="1">
    <location>
        <begin position="90"/>
        <end position="110"/>
    </location>
</feature>
<feature type="transmembrane region" description="Helical; Name=4" evidence="1">
    <location>
        <begin position="135"/>
        <end position="155"/>
    </location>
</feature>
<feature type="transmembrane region" description="Helical; Name=5" evidence="1">
    <location>
        <begin position="162"/>
        <end position="182"/>
    </location>
</feature>
<feature type="transmembrane region" description="Helical; Name=6" evidence="1">
    <location>
        <begin position="210"/>
        <end position="230"/>
    </location>
</feature>
<feature type="short sequence motif" description="NPA 1">
    <location>
        <begin position="72"/>
        <end position="74"/>
    </location>
</feature>
<feature type="short sequence motif" description="NPA 2">
    <location>
        <begin position="188"/>
        <end position="190"/>
    </location>
</feature>
<reference key="1">
    <citation type="journal article" date="1998" name="DNA Res.">
        <title>Structural analysis of Arabidopsis thaliana chromosome 5. VI. Sequence features of the regions of 1,367,185 bp covered by 19 physically assigned P1 and TAC clones.</title>
        <authorList>
            <person name="Kotani H."/>
            <person name="Nakamura Y."/>
            <person name="Sato S."/>
            <person name="Asamizu E."/>
            <person name="Kaneko T."/>
            <person name="Miyajima N."/>
            <person name="Tabata S."/>
        </authorList>
    </citation>
    <scope>NUCLEOTIDE SEQUENCE [LARGE SCALE GENOMIC DNA]</scope>
    <source>
        <strain>cv. Columbia</strain>
    </source>
</reference>
<reference key="2">
    <citation type="journal article" date="2017" name="Plant J.">
        <title>Araport11: a complete reannotation of the Arabidopsis thaliana reference genome.</title>
        <authorList>
            <person name="Cheng C.Y."/>
            <person name="Krishnakumar V."/>
            <person name="Chan A.P."/>
            <person name="Thibaud-Nissen F."/>
            <person name="Schobel S."/>
            <person name="Town C.D."/>
        </authorList>
    </citation>
    <scope>GENOME REANNOTATION</scope>
    <source>
        <strain>cv. Columbia</strain>
    </source>
</reference>
<reference key="3">
    <citation type="journal article" date="2002" name="Science">
        <title>Functional annotation of a full-length Arabidopsis cDNA collection.</title>
        <authorList>
            <person name="Seki M."/>
            <person name="Narusaka M."/>
            <person name="Kamiya A."/>
            <person name="Ishida J."/>
            <person name="Satou M."/>
            <person name="Sakurai T."/>
            <person name="Nakajima M."/>
            <person name="Enju A."/>
            <person name="Akiyama K."/>
            <person name="Oono Y."/>
            <person name="Muramatsu M."/>
            <person name="Hayashizaki Y."/>
            <person name="Kawai J."/>
            <person name="Carninci P."/>
            <person name="Itoh M."/>
            <person name="Ishii Y."/>
            <person name="Arakawa T."/>
            <person name="Shibata K."/>
            <person name="Shinagawa A."/>
            <person name="Shinozaki K."/>
        </authorList>
    </citation>
    <scope>NUCLEOTIDE SEQUENCE [LARGE SCALE MRNA]</scope>
    <source>
        <strain>cv. Columbia</strain>
    </source>
</reference>
<reference key="4">
    <citation type="journal article" date="2003" name="Science">
        <title>Empirical analysis of transcriptional activity in the Arabidopsis genome.</title>
        <authorList>
            <person name="Yamada K."/>
            <person name="Lim J."/>
            <person name="Dale J.M."/>
            <person name="Chen H."/>
            <person name="Shinn P."/>
            <person name="Palm C.J."/>
            <person name="Southwick A.M."/>
            <person name="Wu H.C."/>
            <person name="Kim C.J."/>
            <person name="Nguyen M."/>
            <person name="Pham P.K."/>
            <person name="Cheuk R.F."/>
            <person name="Karlin-Newmann G."/>
            <person name="Liu S.X."/>
            <person name="Lam B."/>
            <person name="Sakano H."/>
            <person name="Wu T."/>
            <person name="Yu G."/>
            <person name="Miranda M."/>
            <person name="Quach H.L."/>
            <person name="Tripp M."/>
            <person name="Chang C.H."/>
            <person name="Lee J.M."/>
            <person name="Toriumi M.J."/>
            <person name="Chan M.M."/>
            <person name="Tang C.C."/>
            <person name="Onodera C.S."/>
            <person name="Deng J.M."/>
            <person name="Akiyama K."/>
            <person name="Ansari Y."/>
            <person name="Arakawa T."/>
            <person name="Banh J."/>
            <person name="Banno F."/>
            <person name="Bowser L."/>
            <person name="Brooks S.Y."/>
            <person name="Carninci P."/>
            <person name="Chao Q."/>
            <person name="Choy N."/>
            <person name="Enju A."/>
            <person name="Goldsmith A.D."/>
            <person name="Gurjal M."/>
            <person name="Hansen N.F."/>
            <person name="Hayashizaki Y."/>
            <person name="Johnson-Hopson C."/>
            <person name="Hsuan V.W."/>
            <person name="Iida K."/>
            <person name="Karnes M."/>
            <person name="Khan S."/>
            <person name="Koesema E."/>
            <person name="Ishida J."/>
            <person name="Jiang P.X."/>
            <person name="Jones T."/>
            <person name="Kawai J."/>
            <person name="Kamiya A."/>
            <person name="Meyers C."/>
            <person name="Nakajima M."/>
            <person name="Narusaka M."/>
            <person name="Seki M."/>
            <person name="Sakurai T."/>
            <person name="Satou M."/>
            <person name="Tamse R."/>
            <person name="Vaysberg M."/>
            <person name="Wallender E.K."/>
            <person name="Wong C."/>
            <person name="Yamamura Y."/>
            <person name="Yuan S."/>
            <person name="Shinozaki K."/>
            <person name="Davis R.W."/>
            <person name="Theologis A."/>
            <person name="Ecker J.R."/>
        </authorList>
    </citation>
    <scope>NUCLEOTIDE SEQUENCE [LARGE SCALE MRNA]</scope>
    <source>
        <strain>cv. Columbia</strain>
    </source>
</reference>
<reference key="5">
    <citation type="journal article" date="2002" name="Genome Biol.">
        <title>From genome to function: the Arabidopsis aquaporins.</title>
        <authorList>
            <person name="Quigley F."/>
            <person name="Rosenberg J.M."/>
            <person name="Shachar-Hill Y."/>
            <person name="Bohnert H.J."/>
        </authorList>
    </citation>
    <scope>NOMENCLATURE</scope>
    <scope>TISSUE SPECIFICITY</scope>
</reference>
<reference key="6">
    <citation type="journal article" date="2005" name="FEBS Lett.">
        <title>Novel type aquaporin SIPs are mainly localized to the ER membrane and show cell-specific expression in Arabidopsis thaliana.</title>
        <authorList>
            <person name="Ishikawa F."/>
            <person name="Suga S."/>
            <person name="Uemura T."/>
            <person name="Sato M.H."/>
            <person name="Maeshima M."/>
        </authorList>
    </citation>
    <scope>FUNCTION</scope>
    <scope>SUBCELLULAR LOCATION</scope>
    <scope>TISSUE SPECIFICITY</scope>
</reference>